<gene>
    <name evidence="1" type="primary">recO</name>
    <name type="ordered locus">sync_0604</name>
</gene>
<organism>
    <name type="scientific">Synechococcus sp. (strain CC9311)</name>
    <dbReference type="NCBI Taxonomy" id="64471"/>
    <lineage>
        <taxon>Bacteria</taxon>
        <taxon>Bacillati</taxon>
        <taxon>Cyanobacteriota</taxon>
        <taxon>Cyanophyceae</taxon>
        <taxon>Synechococcales</taxon>
        <taxon>Synechococcaceae</taxon>
        <taxon>Synechococcus</taxon>
    </lineage>
</organism>
<protein>
    <recommendedName>
        <fullName evidence="1">DNA repair protein RecO</fullName>
    </recommendedName>
    <alternativeName>
        <fullName evidence="1">Recombination protein O</fullName>
    </alternativeName>
</protein>
<evidence type="ECO:0000255" key="1">
    <source>
        <dbReference type="HAMAP-Rule" id="MF_00201"/>
    </source>
</evidence>
<dbReference type="EMBL" id="CP000435">
    <property type="protein sequence ID" value="ABI47376.1"/>
    <property type="molecule type" value="Genomic_DNA"/>
</dbReference>
<dbReference type="RefSeq" id="WP_011618549.1">
    <property type="nucleotide sequence ID" value="NC_008319.1"/>
</dbReference>
<dbReference type="SMR" id="Q0ICK0"/>
<dbReference type="STRING" id="64471.sync_0604"/>
<dbReference type="KEGG" id="syg:sync_0604"/>
<dbReference type="eggNOG" id="COG1381">
    <property type="taxonomic scope" value="Bacteria"/>
</dbReference>
<dbReference type="HOGENOM" id="CLU_066632_0_0_3"/>
<dbReference type="OrthoDB" id="9797083at2"/>
<dbReference type="Proteomes" id="UP000001961">
    <property type="component" value="Chromosome"/>
</dbReference>
<dbReference type="GO" id="GO:0043590">
    <property type="term" value="C:bacterial nucleoid"/>
    <property type="evidence" value="ECO:0007669"/>
    <property type="project" value="TreeGrafter"/>
</dbReference>
<dbReference type="GO" id="GO:0006310">
    <property type="term" value="P:DNA recombination"/>
    <property type="evidence" value="ECO:0007669"/>
    <property type="project" value="UniProtKB-UniRule"/>
</dbReference>
<dbReference type="GO" id="GO:0006302">
    <property type="term" value="P:double-strand break repair"/>
    <property type="evidence" value="ECO:0007669"/>
    <property type="project" value="TreeGrafter"/>
</dbReference>
<dbReference type="Gene3D" id="2.40.50.140">
    <property type="entry name" value="Nucleic acid-binding proteins"/>
    <property type="match status" value="1"/>
</dbReference>
<dbReference type="HAMAP" id="MF_00201">
    <property type="entry name" value="RecO"/>
    <property type="match status" value="1"/>
</dbReference>
<dbReference type="InterPro" id="IPR037278">
    <property type="entry name" value="ARFGAP/RecO"/>
</dbReference>
<dbReference type="InterPro" id="IPR022572">
    <property type="entry name" value="DNA_rep/recomb_RecO_N"/>
</dbReference>
<dbReference type="InterPro" id="IPR012340">
    <property type="entry name" value="NA-bd_OB-fold"/>
</dbReference>
<dbReference type="InterPro" id="IPR003717">
    <property type="entry name" value="RecO"/>
</dbReference>
<dbReference type="PANTHER" id="PTHR33991">
    <property type="entry name" value="DNA REPAIR PROTEIN RECO"/>
    <property type="match status" value="1"/>
</dbReference>
<dbReference type="PANTHER" id="PTHR33991:SF1">
    <property type="entry name" value="DNA REPAIR PROTEIN RECO"/>
    <property type="match status" value="1"/>
</dbReference>
<dbReference type="Pfam" id="PF02565">
    <property type="entry name" value="RecO_C"/>
    <property type="match status" value="1"/>
</dbReference>
<dbReference type="Pfam" id="PF11967">
    <property type="entry name" value="RecO_N"/>
    <property type="match status" value="1"/>
</dbReference>
<dbReference type="SUPFAM" id="SSF57863">
    <property type="entry name" value="ArfGap/RecO-like zinc finger"/>
    <property type="match status" value="1"/>
</dbReference>
<dbReference type="SUPFAM" id="SSF50249">
    <property type="entry name" value="Nucleic acid-binding proteins"/>
    <property type="match status" value="1"/>
</dbReference>
<comment type="function">
    <text evidence="1">Involved in DNA repair and RecF pathway recombination.</text>
</comment>
<comment type="similarity">
    <text evidence="1">Belongs to the RecO family.</text>
</comment>
<feature type="chain" id="PRO_1000193427" description="DNA repair protein RecO">
    <location>
        <begin position="1"/>
        <end position="271"/>
    </location>
</feature>
<accession>Q0ICK0</accession>
<name>RECO_SYNS3</name>
<reference key="1">
    <citation type="journal article" date="2006" name="Proc. Natl. Acad. Sci. U.S.A.">
        <title>Genome sequence of Synechococcus CC9311: insights into adaptation to a coastal environment.</title>
        <authorList>
            <person name="Palenik B."/>
            <person name="Ren Q."/>
            <person name="Dupont C.L."/>
            <person name="Myers G.S."/>
            <person name="Heidelberg J.F."/>
            <person name="Badger J.H."/>
            <person name="Madupu R."/>
            <person name="Nelson W.C."/>
            <person name="Brinkac L.M."/>
            <person name="Dodson R.J."/>
            <person name="Durkin A.S."/>
            <person name="Daugherty S.C."/>
            <person name="Sullivan S.A."/>
            <person name="Khouri H."/>
            <person name="Mohamoud Y."/>
            <person name="Halpin R."/>
            <person name="Paulsen I.T."/>
        </authorList>
    </citation>
    <scope>NUCLEOTIDE SEQUENCE [LARGE SCALE GENOMIC DNA]</scope>
    <source>
        <strain>CC9311</strain>
    </source>
</reference>
<proteinExistence type="inferred from homology"/>
<keyword id="KW-0227">DNA damage</keyword>
<keyword id="KW-0233">DNA recombination</keyword>
<keyword id="KW-0234">DNA repair</keyword>
<keyword id="KW-1185">Reference proteome</keyword>
<sequence length="271" mass="29311">MSPERRIEGLALKVGPLGEHDRLLTLLSDDVGLIRLAVPGARKPRSSLAAAVPLTTMELQVGGRSGLLRVRQLRVQHNFGNVGQRLETLAAAQALSELSISLVAGDDPVPGMLSAVLMHLERLELLAQKQRSSEMKSAEGERVDRTLATLVQACVHLLALGGYGLPLQTCCRSGAALSPPIGNWEWRCSLLADEGLAIGSQAGAAIQINPSELALLQRLTRLELPERQDGGLMGPRPVWLRLFTLLESWCRVHLPRPVRSFAMVREAVANA</sequence>